<feature type="chain" id="PRO_0000416856" description="Gamma aminobutyrate transaminase 2">
    <location>
        <begin position="1"/>
        <end position="458"/>
    </location>
</feature>
<feature type="binding site" evidence="1">
    <location>
        <begin position="114"/>
        <end position="115"/>
    </location>
    <ligand>
        <name>pyridoxal 5'-phosphate</name>
        <dbReference type="ChEBI" id="CHEBI:597326"/>
    </ligand>
</feature>
<feature type="binding site" evidence="1">
    <location>
        <position position="147"/>
    </location>
    <ligand>
        <name>substrate</name>
    </ligand>
</feature>
<feature type="binding site" evidence="1">
    <location>
        <position position="254"/>
    </location>
    <ligand>
        <name>pyridoxal 5'-phosphate</name>
        <dbReference type="ChEBI" id="CHEBI:597326"/>
    </ligand>
</feature>
<feature type="binding site" evidence="1">
    <location>
        <position position="283"/>
    </location>
    <ligand>
        <name>substrate</name>
    </ligand>
</feature>
<feature type="modified residue" description="N6-(pyridoxal phosphate)lysine" evidence="1">
    <location>
        <position position="283"/>
    </location>
</feature>
<evidence type="ECO:0000250" key="1"/>
<evidence type="ECO:0000269" key="2">
    <source>
    </source>
</evidence>
<evidence type="ECO:0000269" key="3">
    <source>
    </source>
</evidence>
<evidence type="ECO:0000305" key="4"/>
<accession>Q84P53</accession>
<proteinExistence type="evidence at protein level"/>
<dbReference type="EC" id="2.6.1.96"/>
<dbReference type="EMBL" id="AY240230">
    <property type="protein sequence ID" value="AAO92256.1"/>
    <property type="molecule type" value="mRNA"/>
</dbReference>
<dbReference type="EMBL" id="AB359917">
    <property type="protein sequence ID" value="BAG16483.1"/>
    <property type="molecule type" value="mRNA"/>
</dbReference>
<dbReference type="SMR" id="Q84P53"/>
<dbReference type="STRING" id="4081.Q84P53"/>
<dbReference type="PaxDb" id="4081-Solyc12g006470.1.1"/>
<dbReference type="eggNOG" id="KOG1404">
    <property type="taxonomic scope" value="Eukaryota"/>
</dbReference>
<dbReference type="InParanoid" id="Q84P53"/>
<dbReference type="BioCyc" id="MetaCyc:MONOMER-15562"/>
<dbReference type="BRENDA" id="2.6.1.19">
    <property type="organism ID" value="3101"/>
</dbReference>
<dbReference type="BRENDA" id="2.6.1.96">
    <property type="organism ID" value="3101"/>
</dbReference>
<dbReference type="Proteomes" id="UP000004994">
    <property type="component" value="Unplaced"/>
</dbReference>
<dbReference type="ExpressionAtlas" id="Q84P53">
    <property type="expression patterns" value="baseline and differential"/>
</dbReference>
<dbReference type="GO" id="GO:0005737">
    <property type="term" value="C:cytoplasm"/>
    <property type="evidence" value="ECO:0007669"/>
    <property type="project" value="UniProtKB-SubCell"/>
</dbReference>
<dbReference type="GO" id="GO:0034387">
    <property type="term" value="F:4-aminobutyrate:pyruvate transaminase activity"/>
    <property type="evidence" value="ECO:0007669"/>
    <property type="project" value="UniProtKB-EC"/>
</dbReference>
<dbReference type="GO" id="GO:0004015">
    <property type="term" value="F:adenosylmethionine-8-amino-7-oxononanoate transaminase activity"/>
    <property type="evidence" value="ECO:0000318"/>
    <property type="project" value="GO_Central"/>
</dbReference>
<dbReference type="GO" id="GO:0030170">
    <property type="term" value="F:pyridoxal phosphate binding"/>
    <property type="evidence" value="ECO:0007669"/>
    <property type="project" value="InterPro"/>
</dbReference>
<dbReference type="GO" id="GO:0009102">
    <property type="term" value="P:biotin biosynthetic process"/>
    <property type="evidence" value="ECO:0000318"/>
    <property type="project" value="GO_Central"/>
</dbReference>
<dbReference type="GO" id="GO:0009448">
    <property type="term" value="P:gamma-aminobutyric acid metabolic process"/>
    <property type="evidence" value="ECO:0000318"/>
    <property type="project" value="GO_Central"/>
</dbReference>
<dbReference type="CDD" id="cd00610">
    <property type="entry name" value="OAT_like"/>
    <property type="match status" value="1"/>
</dbReference>
<dbReference type="FunFam" id="3.40.640.10:FF:000014">
    <property type="entry name" value="Adenosylmethionine-8-amino-7-oxononanoate aminotransferase, probable"/>
    <property type="match status" value="1"/>
</dbReference>
<dbReference type="Gene3D" id="3.90.1150.10">
    <property type="entry name" value="Aspartate Aminotransferase, domain 1"/>
    <property type="match status" value="1"/>
</dbReference>
<dbReference type="Gene3D" id="3.40.640.10">
    <property type="entry name" value="Type I PLP-dependent aspartate aminotransferase-like (Major domain)"/>
    <property type="match status" value="1"/>
</dbReference>
<dbReference type="InterPro" id="IPR005814">
    <property type="entry name" value="Aminotrans_3"/>
</dbReference>
<dbReference type="InterPro" id="IPR049704">
    <property type="entry name" value="Aminotrans_3_PPA_site"/>
</dbReference>
<dbReference type="InterPro" id="IPR015424">
    <property type="entry name" value="PyrdxlP-dep_Trfase"/>
</dbReference>
<dbReference type="InterPro" id="IPR015421">
    <property type="entry name" value="PyrdxlP-dep_Trfase_major"/>
</dbReference>
<dbReference type="InterPro" id="IPR015422">
    <property type="entry name" value="PyrdxlP-dep_Trfase_small"/>
</dbReference>
<dbReference type="NCBIfam" id="NF004767">
    <property type="entry name" value="PRK06105.1"/>
    <property type="match status" value="1"/>
</dbReference>
<dbReference type="PANTHER" id="PTHR42684">
    <property type="entry name" value="ADENOSYLMETHIONINE-8-AMINO-7-OXONONANOATE AMINOTRANSFERASE"/>
    <property type="match status" value="1"/>
</dbReference>
<dbReference type="PANTHER" id="PTHR42684:SF10">
    <property type="entry name" value="GAMMA AMINOBUTYRATE TRANSAMINASE 2"/>
    <property type="match status" value="1"/>
</dbReference>
<dbReference type="Pfam" id="PF00202">
    <property type="entry name" value="Aminotran_3"/>
    <property type="match status" value="1"/>
</dbReference>
<dbReference type="SUPFAM" id="SSF53383">
    <property type="entry name" value="PLP-dependent transferases"/>
    <property type="match status" value="1"/>
</dbReference>
<dbReference type="PROSITE" id="PS00600">
    <property type="entry name" value="AA_TRANSFER_CLASS_3"/>
    <property type="match status" value="1"/>
</dbReference>
<name>GATP2_SOLLC</name>
<protein>
    <recommendedName>
        <fullName>Gamma aminobutyrate transaminase 2</fullName>
    </recommendedName>
    <alternativeName>
        <fullName>Gamma-aminobutyrate transaminase isozyme 2</fullName>
        <shortName>LeGABA-TP2</shortName>
        <shortName>SlGABA-T2</shortName>
        <ecNumber>2.6.1.96</ecNumber>
    </alternativeName>
</protein>
<comment type="function">
    <text evidence="3">Transaminase that degrades gamma-amino butyric acid (GABA) and uses pyruvate or glyoxylate as amino-group acceptor. Cannot use beta-alanine, ornithine, acetylornithine, serine, glycine, asparagine, glutamine, glutamate, valine, leucine, isoleucine, methionine, phenylalanine, histidine, lysine, arginine, aspartate, threonine, tyrosine, tryptophan, proline, or cysteine as amino donors. May be responsible for establishing the GABA gradient in the carpel.</text>
</comment>
<comment type="catalytic activity">
    <reaction evidence="3">
        <text>4-aminobutanoate + pyruvate = succinate semialdehyde + L-alanine</text>
        <dbReference type="Rhea" id="RHEA:32263"/>
        <dbReference type="ChEBI" id="CHEBI:15361"/>
        <dbReference type="ChEBI" id="CHEBI:57706"/>
        <dbReference type="ChEBI" id="CHEBI:57972"/>
        <dbReference type="ChEBI" id="CHEBI:59888"/>
        <dbReference type="EC" id="2.6.1.96"/>
    </reaction>
</comment>
<comment type="catalytic activity">
    <reaction evidence="3">
        <text>4-aminobutanoate + glyoxylate = succinate semialdehyde + glycine</text>
        <dbReference type="Rhea" id="RHEA:32267"/>
        <dbReference type="ChEBI" id="CHEBI:36655"/>
        <dbReference type="ChEBI" id="CHEBI:57305"/>
        <dbReference type="ChEBI" id="CHEBI:57706"/>
        <dbReference type="ChEBI" id="CHEBI:59888"/>
        <dbReference type="EC" id="2.6.1.96"/>
    </reaction>
</comment>
<comment type="subcellular location">
    <subcellularLocation>
        <location evidence="3">Cytoplasm</location>
    </subcellularLocation>
</comment>
<comment type="tissue specificity">
    <text evidence="2">Expressed in leaves, roots, stems, flowers and fruits. Expressed in carpels, but not in stamens.</text>
</comment>
<comment type="developmental stage">
    <text evidence="2 3">Loss of expression in the yellow and red fruits, after the breaker stage.</text>
</comment>
<comment type="similarity">
    <text evidence="4">Belongs to the class-III pyridoxal-phosphate-dependent aminotransferase family.</text>
</comment>
<gene>
    <name type="primary">GABA-TP2</name>
    <name type="synonym">GABA-T2</name>
</gene>
<sequence length="458" mass="50503">MAKTNGFMGHDMLAPFTAAWMIDMGPLVIDKAEGSYVYGVNGKKYLDSLSGLWCTVLGGSEPRLIEAASKQLNKSAFYHSFWNRTTKPSLDLAKELINMFTANKMGKVFFTSSGSEANDTQVKLVWYYNNAIGRPNKKKIISRKNAYHGSTYMTAGLSGLPSLHLKFDLPPPYILHTDCPHYWNYHLPGETEEEYSTRLANNLENLILKEGPETVAAFIAEPVMGGAGVIIPPATYFEKIQAVLKKYDILFIADEVICGFGRLGTMFGCDKYNIKPDLVSIAKALSGGYIPIGAVLVSEEISKVIMSQSNQLGVFCHGFTYSGHPVACAVALEALKIYKEKNITEVVNKLSPKLQEGLKAFIDSPIIGEIRGTGLVLSTEFVDNKSPNDPFPPEWGVGTYFGSQCQKHGMLVSFSGDHVNMAPPFTLSLEELDEMISIYGKALKDTEKRVEELKSQKK</sequence>
<keyword id="KW-0032">Aminotransferase</keyword>
<keyword id="KW-0963">Cytoplasm</keyword>
<keyword id="KW-0663">Pyridoxal phosphate</keyword>
<keyword id="KW-1185">Reference proteome</keyword>
<keyword id="KW-0808">Transferase</keyword>
<organism>
    <name type="scientific">Solanum lycopersicum</name>
    <name type="common">Tomato</name>
    <name type="synonym">Lycopersicon esculentum</name>
    <dbReference type="NCBI Taxonomy" id="4081"/>
    <lineage>
        <taxon>Eukaryota</taxon>
        <taxon>Viridiplantae</taxon>
        <taxon>Streptophyta</taxon>
        <taxon>Embryophyta</taxon>
        <taxon>Tracheophyta</taxon>
        <taxon>Spermatophyta</taxon>
        <taxon>Magnoliopsida</taxon>
        <taxon>eudicotyledons</taxon>
        <taxon>Gunneridae</taxon>
        <taxon>Pentapetalae</taxon>
        <taxon>asterids</taxon>
        <taxon>lamiids</taxon>
        <taxon>Solanales</taxon>
        <taxon>Solanaceae</taxon>
        <taxon>Solanoideae</taxon>
        <taxon>Solaneae</taxon>
        <taxon>Solanum</taxon>
        <taxon>Solanum subgen. Lycopersicon</taxon>
    </lineage>
</organism>
<reference key="1">
    <citation type="journal article" date="2008" name="Plant Cell Physiol.">
        <title>Biochemical mechanism on GABA accumulation during fruit development in tomato.</title>
        <authorList>
            <person name="Akihiro T."/>
            <person name="Koike S."/>
            <person name="Tani R."/>
            <person name="Tominaga T."/>
            <person name="Watanabe S."/>
            <person name="Iijima Y."/>
            <person name="Aoki K."/>
            <person name="Shibata D."/>
            <person name="Ashihara H."/>
            <person name="Matsukura C."/>
            <person name="Akama K."/>
            <person name="Fujimura T."/>
            <person name="Ezura H."/>
        </authorList>
    </citation>
    <scope>NUCLEOTIDE SEQUENCE [MRNA]</scope>
    <scope>TISSUE SPECIFICITY</scope>
    <scope>DEVELOPMENTAL STAGE</scope>
    <source>
        <strain>cv. MicroTom</strain>
        <tissue>Fruit</tissue>
    </source>
</reference>
<reference key="2">
    <citation type="journal article" date="2009" name="J. Exp. Bot.">
        <title>Subcellular localization and expression of multiple tomato gamma-aminobutyrate transaminases that utilize both pyruvate and glyoxylate.</title>
        <authorList>
            <person name="Clark S.M."/>
            <person name="Di Leo R."/>
            <person name="Van Cauwenberghe O.R."/>
            <person name="Mullen R.T."/>
            <person name="Shelp B.J."/>
        </authorList>
    </citation>
    <scope>NUCLEOTIDE SEQUENCE [MRNA]</scope>
    <scope>FUNCTION</scope>
    <scope>CATALYTIC ACTIVITY</scope>
    <scope>SUBCELLULAR LOCATION</scope>
    <scope>DEVELOPMENTAL STAGE</scope>
    <source>
        <strain>cv. MicroTom</strain>
    </source>
</reference>